<gene>
    <name type="primary">ZDS1</name>
    <name type="synonym">ZDS</name>
</gene>
<dbReference type="EC" id="1.3.5.6"/>
<dbReference type="EMBL" id="AF047490">
    <property type="protein sequence ID" value="AAD02462.1"/>
    <property type="molecule type" value="mRNA"/>
</dbReference>
<dbReference type="SMR" id="Q9ZTP4"/>
<dbReference type="FunCoup" id="Q9ZTP4">
    <property type="interactions" value="907"/>
</dbReference>
<dbReference type="STRING" id="4577.Q9ZTP4"/>
<dbReference type="PaxDb" id="4577-GRMZM2G454952_P01"/>
<dbReference type="MaizeGDB" id="222743"/>
<dbReference type="eggNOG" id="KOG0029">
    <property type="taxonomic scope" value="Eukaryota"/>
</dbReference>
<dbReference type="InParanoid" id="Q9ZTP4"/>
<dbReference type="UniPathway" id="UPA00803"/>
<dbReference type="Proteomes" id="UP000007305">
    <property type="component" value="Unplaced"/>
</dbReference>
<dbReference type="ExpressionAtlas" id="Q9ZTP4">
    <property type="expression patterns" value="baseline and differential"/>
</dbReference>
<dbReference type="GO" id="GO:0009507">
    <property type="term" value="C:chloroplast"/>
    <property type="evidence" value="ECO:0007669"/>
    <property type="project" value="UniProtKB-SubCell"/>
</dbReference>
<dbReference type="GO" id="GO:0009509">
    <property type="term" value="C:chromoplast"/>
    <property type="evidence" value="ECO:0007669"/>
    <property type="project" value="UniProtKB-SubCell"/>
</dbReference>
<dbReference type="GO" id="GO:0016719">
    <property type="term" value="F:9,9'-di-cis-zeta-carotene desaturase activity"/>
    <property type="evidence" value="ECO:0007669"/>
    <property type="project" value="UniProtKB-EC"/>
</dbReference>
<dbReference type="GO" id="GO:0050660">
    <property type="term" value="F:flavin adenine dinucleotide binding"/>
    <property type="evidence" value="ECO:0007669"/>
    <property type="project" value="UniProtKB-ARBA"/>
</dbReference>
<dbReference type="GO" id="GO:0016491">
    <property type="term" value="F:oxidoreductase activity"/>
    <property type="evidence" value="ECO:0000318"/>
    <property type="project" value="GO_Central"/>
</dbReference>
<dbReference type="GO" id="GO:0016117">
    <property type="term" value="P:carotenoid biosynthetic process"/>
    <property type="evidence" value="ECO:0007669"/>
    <property type="project" value="UniProtKB-KW"/>
</dbReference>
<dbReference type="FunFam" id="3.50.50.60:FF:000111">
    <property type="entry name" value="Zeta-carotene desaturase"/>
    <property type="match status" value="1"/>
</dbReference>
<dbReference type="Gene3D" id="3.50.50.60">
    <property type="entry name" value="FAD/NAD(P)-binding domain"/>
    <property type="match status" value="1"/>
</dbReference>
<dbReference type="InterPro" id="IPR002937">
    <property type="entry name" value="Amino_oxidase"/>
</dbReference>
<dbReference type="InterPro" id="IPR036188">
    <property type="entry name" value="FAD/NAD-bd_sf"/>
</dbReference>
<dbReference type="InterPro" id="IPR014103">
    <property type="entry name" value="Zeta_caro_desat"/>
</dbReference>
<dbReference type="InterPro" id="IPR050464">
    <property type="entry name" value="Zeta_carotene_desat/Oxidored"/>
</dbReference>
<dbReference type="NCBIfam" id="TIGR02732">
    <property type="entry name" value="zeta_caro_desat"/>
    <property type="match status" value="1"/>
</dbReference>
<dbReference type="PANTHER" id="PTHR42923">
    <property type="entry name" value="PROTOPORPHYRINOGEN OXIDASE"/>
    <property type="match status" value="1"/>
</dbReference>
<dbReference type="PANTHER" id="PTHR42923:SF41">
    <property type="entry name" value="ZETA-CAROTENE DESATURASE, CHLOROPLASTIC_CHROMOPLASTIC"/>
    <property type="match status" value="1"/>
</dbReference>
<dbReference type="Pfam" id="PF01593">
    <property type="entry name" value="Amino_oxidase"/>
    <property type="match status" value="1"/>
</dbReference>
<dbReference type="PRINTS" id="PR00419">
    <property type="entry name" value="ADXRDTASE"/>
</dbReference>
<dbReference type="SUPFAM" id="SSF51905">
    <property type="entry name" value="FAD/NAD(P)-binding domain"/>
    <property type="match status" value="1"/>
</dbReference>
<evidence type="ECO:0000255" key="1"/>
<evidence type="ECO:0000256" key="2">
    <source>
        <dbReference type="SAM" id="MobiDB-lite"/>
    </source>
</evidence>
<evidence type="ECO:0000305" key="3"/>
<feature type="transit peptide" description="Chloroplast and chromoplast" evidence="1">
    <location>
        <begin position="1"/>
        <end status="unknown"/>
    </location>
</feature>
<feature type="chain" id="PRO_0000041608" description="Zeta-carotene desaturase, chloroplastic/chromoplastic">
    <location>
        <begin status="unknown"/>
        <end position="570"/>
    </location>
</feature>
<feature type="region of interest" description="Disordered" evidence="2">
    <location>
        <begin position="1"/>
        <end position="33"/>
    </location>
</feature>
<feature type="compositionally biased region" description="Low complexity" evidence="2">
    <location>
        <begin position="1"/>
        <end position="16"/>
    </location>
</feature>
<sequence>MASVAATTTLAPALAPRRARPGTGLVPPRRASAVAARSTVTSPTWRQRSQRLFPPEPEHYRGPKLKVAIIGAGLAGMSTAVELLDQGHEVDLYESRPFIGGKVGSFVDRQGNHIEMGLHVFFGCYSNLFRLMKKVGADNNLLVKEHTHTFVNKGGTIGELDFRFPVGAPLHGIQAFLRTNQLKVYDKARNAVALALSPVVRALVDPDGALQQVRDLDDISFSDWFMSKGGTRESITRMWDPVRYALGFIDCDNISARCMLTIFTLFATKTEASLLRMLKGSPDVYLSGPIKKYITDRGGRFHLRWGCREVLYEKSPDGETYVKGLLLTKATSREIIKADAYVAACDVPGIKRLLPSEWREWEMFDNIYKLDGVPVVTVQLRYNGWVTELQDLEKSRQLQRAVGLDNLLYTADADFSCFSDLALSSPADYYIEGQGSLIQAVLTPGDPYMPLPNEEIISKVQKQVVELFPSSRGLEVTWSSVVKIGQSLYREAPGNDPFRPDQKTPVKNFFLSGSYTKQDYIDSMEGATLSGRRTSAYICGAGEELLALRKKLLIDDGEKALGNVQVLQAS</sequence>
<organism>
    <name type="scientific">Zea mays</name>
    <name type="common">Maize</name>
    <dbReference type="NCBI Taxonomy" id="4577"/>
    <lineage>
        <taxon>Eukaryota</taxon>
        <taxon>Viridiplantae</taxon>
        <taxon>Streptophyta</taxon>
        <taxon>Embryophyta</taxon>
        <taxon>Tracheophyta</taxon>
        <taxon>Spermatophyta</taxon>
        <taxon>Magnoliopsida</taxon>
        <taxon>Liliopsida</taxon>
        <taxon>Poales</taxon>
        <taxon>Poaceae</taxon>
        <taxon>PACMAD clade</taxon>
        <taxon>Panicoideae</taxon>
        <taxon>Andropogonodae</taxon>
        <taxon>Andropogoneae</taxon>
        <taxon>Tripsacinae</taxon>
        <taxon>Zea</taxon>
    </lineage>
</organism>
<comment type="function">
    <text>Catalyzes the conversion of zeta-carotene to lycopene via the intermediary of neurosporene. It carries out two consecutive desaturations (introduction of double bonds) at positions C-7 and C-7'.</text>
</comment>
<comment type="catalytic activity">
    <reaction>
        <text>9,9'-di-cis-zeta-carotene + 2 a quinone = 7,7',9,9'-tetra-cis-lycopene + 2 a quinol</text>
        <dbReference type="Rhea" id="RHEA:30955"/>
        <dbReference type="ChEBI" id="CHEBI:24646"/>
        <dbReference type="ChEBI" id="CHEBI:48716"/>
        <dbReference type="ChEBI" id="CHEBI:62466"/>
        <dbReference type="ChEBI" id="CHEBI:132124"/>
        <dbReference type="EC" id="1.3.5.6"/>
    </reaction>
</comment>
<comment type="cofactor">
    <cofactor evidence="3">
        <name>NAD(+)</name>
        <dbReference type="ChEBI" id="CHEBI:57540"/>
    </cofactor>
    <cofactor evidence="3">
        <name>NADP(+)</name>
        <dbReference type="ChEBI" id="CHEBI:58349"/>
    </cofactor>
    <cofactor evidence="3">
        <name>FAD</name>
        <dbReference type="ChEBI" id="CHEBI:57692"/>
    </cofactor>
</comment>
<comment type="pathway">
    <text>Carotenoid biosynthesis; lycopene biosynthesis.</text>
</comment>
<comment type="subcellular location">
    <subcellularLocation>
        <location>Plastid</location>
        <location>Chloroplast</location>
    </subcellularLocation>
    <subcellularLocation>
        <location>Plastid</location>
        <location>Chromoplast</location>
    </subcellularLocation>
</comment>
<comment type="similarity">
    <text evidence="3">Belongs to the zeta carotene desaturase family.</text>
</comment>
<name>ZDS_MAIZE</name>
<reference key="1">
    <citation type="online journal article" date="1999" name="Plant Gene Register">
        <title>A maize cDNA encoding zeta carotene desaturase.</title>
        <authorList>
            <person name="Luo R."/>
            <person name="Wurtzel E.T."/>
        </authorList>
        <locator>PGR99-118</locator>
    </citation>
    <scope>NUCLEOTIDE SEQUENCE [MRNA]</scope>
</reference>
<keyword id="KW-0125">Carotenoid biosynthesis</keyword>
<keyword id="KW-0150">Chloroplast</keyword>
<keyword id="KW-0957">Chromoplast</keyword>
<keyword id="KW-0274">FAD</keyword>
<keyword id="KW-0285">Flavoprotein</keyword>
<keyword id="KW-0520">NAD</keyword>
<keyword id="KW-0560">Oxidoreductase</keyword>
<keyword id="KW-0934">Plastid</keyword>
<keyword id="KW-1185">Reference proteome</keyword>
<keyword id="KW-0809">Transit peptide</keyword>
<proteinExistence type="evidence at transcript level"/>
<protein>
    <recommendedName>
        <fullName>Zeta-carotene desaturase, chloroplastic/chromoplastic</fullName>
        <ecNumber>1.3.5.6</ecNumber>
    </recommendedName>
    <alternativeName>
        <fullName>9,9'-di-cis-zeta-carotene desaturase</fullName>
    </alternativeName>
    <alternativeName>
        <fullName>Carotene 7,8-desaturase</fullName>
    </alternativeName>
</protein>
<accession>Q9ZTP4</accession>